<protein>
    <recommendedName>
        <fullName>NPL4-like protein 1</fullName>
    </recommendedName>
</protein>
<accession>Q9LYC2</accession>
<gene>
    <name type="ordered locus">At3g63000</name>
    <name type="ORF">T20O10.100</name>
</gene>
<keyword id="KW-0002">3D-structure</keyword>
<keyword id="KW-0597">Phosphoprotein</keyword>
<keyword id="KW-1185">Reference proteome</keyword>
<keyword id="KW-0833">Ubl conjugation pathway</keyword>
<reference key="1">
    <citation type="journal article" date="2000" name="Nature">
        <title>Sequence and analysis of chromosome 3 of the plant Arabidopsis thaliana.</title>
        <authorList>
            <person name="Salanoubat M."/>
            <person name="Lemcke K."/>
            <person name="Rieger M."/>
            <person name="Ansorge W."/>
            <person name="Unseld M."/>
            <person name="Fartmann B."/>
            <person name="Valle G."/>
            <person name="Bloecker H."/>
            <person name="Perez-Alonso M."/>
            <person name="Obermaier B."/>
            <person name="Delseny M."/>
            <person name="Boutry M."/>
            <person name="Grivell L.A."/>
            <person name="Mache R."/>
            <person name="Puigdomenech P."/>
            <person name="De Simone V."/>
            <person name="Choisne N."/>
            <person name="Artiguenave F."/>
            <person name="Robert C."/>
            <person name="Brottier P."/>
            <person name="Wincker P."/>
            <person name="Cattolico L."/>
            <person name="Weissenbach J."/>
            <person name="Saurin W."/>
            <person name="Quetier F."/>
            <person name="Schaefer M."/>
            <person name="Mueller-Auer S."/>
            <person name="Gabel C."/>
            <person name="Fuchs M."/>
            <person name="Benes V."/>
            <person name="Wurmbach E."/>
            <person name="Drzonek H."/>
            <person name="Erfle H."/>
            <person name="Jordan N."/>
            <person name="Bangert S."/>
            <person name="Wiedelmann R."/>
            <person name="Kranz H."/>
            <person name="Voss H."/>
            <person name="Holland R."/>
            <person name="Brandt P."/>
            <person name="Nyakatura G."/>
            <person name="Vezzi A."/>
            <person name="D'Angelo M."/>
            <person name="Pallavicini A."/>
            <person name="Toppo S."/>
            <person name="Simionati B."/>
            <person name="Conrad A."/>
            <person name="Hornischer K."/>
            <person name="Kauer G."/>
            <person name="Loehnert T.-H."/>
            <person name="Nordsiek G."/>
            <person name="Reichelt J."/>
            <person name="Scharfe M."/>
            <person name="Schoen O."/>
            <person name="Bargues M."/>
            <person name="Terol J."/>
            <person name="Climent J."/>
            <person name="Navarro P."/>
            <person name="Collado C."/>
            <person name="Perez-Perez A."/>
            <person name="Ottenwaelder B."/>
            <person name="Duchemin D."/>
            <person name="Cooke R."/>
            <person name="Laudie M."/>
            <person name="Berger-Llauro C."/>
            <person name="Purnelle B."/>
            <person name="Masuy D."/>
            <person name="de Haan M."/>
            <person name="Maarse A.C."/>
            <person name="Alcaraz J.-P."/>
            <person name="Cottet A."/>
            <person name="Casacuberta E."/>
            <person name="Monfort A."/>
            <person name="Argiriou A."/>
            <person name="Flores M."/>
            <person name="Liguori R."/>
            <person name="Vitale D."/>
            <person name="Mannhaupt G."/>
            <person name="Haase D."/>
            <person name="Schoof H."/>
            <person name="Rudd S."/>
            <person name="Zaccaria P."/>
            <person name="Mewes H.-W."/>
            <person name="Mayer K.F.X."/>
            <person name="Kaul S."/>
            <person name="Town C.D."/>
            <person name="Koo H.L."/>
            <person name="Tallon L.J."/>
            <person name="Jenkins J."/>
            <person name="Rooney T."/>
            <person name="Rizzo M."/>
            <person name="Walts A."/>
            <person name="Utterback T."/>
            <person name="Fujii C.Y."/>
            <person name="Shea T.P."/>
            <person name="Creasy T.H."/>
            <person name="Haas B."/>
            <person name="Maiti R."/>
            <person name="Wu D."/>
            <person name="Peterson J."/>
            <person name="Van Aken S."/>
            <person name="Pai G."/>
            <person name="Militscher J."/>
            <person name="Sellers P."/>
            <person name="Gill J.E."/>
            <person name="Feldblyum T.V."/>
            <person name="Preuss D."/>
            <person name="Lin X."/>
            <person name="Nierman W.C."/>
            <person name="Salzberg S.L."/>
            <person name="White O."/>
            <person name="Venter J.C."/>
            <person name="Fraser C.M."/>
            <person name="Kaneko T."/>
            <person name="Nakamura Y."/>
            <person name="Sato S."/>
            <person name="Kato T."/>
            <person name="Asamizu E."/>
            <person name="Sasamoto S."/>
            <person name="Kimura T."/>
            <person name="Idesawa K."/>
            <person name="Kawashima K."/>
            <person name="Kishida Y."/>
            <person name="Kiyokawa C."/>
            <person name="Kohara M."/>
            <person name="Matsumoto M."/>
            <person name="Matsuno A."/>
            <person name="Muraki A."/>
            <person name="Nakayama S."/>
            <person name="Nakazaki N."/>
            <person name="Shinpo S."/>
            <person name="Takeuchi C."/>
            <person name="Wada T."/>
            <person name="Watanabe A."/>
            <person name="Yamada M."/>
            <person name="Yasuda M."/>
            <person name="Tabata S."/>
        </authorList>
    </citation>
    <scope>NUCLEOTIDE SEQUENCE [LARGE SCALE GENOMIC DNA]</scope>
    <source>
        <strain>cv. Columbia</strain>
    </source>
</reference>
<reference key="2">
    <citation type="journal article" date="2017" name="Plant J.">
        <title>Araport11: a complete reannotation of the Arabidopsis thaliana reference genome.</title>
        <authorList>
            <person name="Cheng C.Y."/>
            <person name="Krishnakumar V."/>
            <person name="Chan A.P."/>
            <person name="Thibaud-Nissen F."/>
            <person name="Schobel S."/>
            <person name="Town C.D."/>
        </authorList>
    </citation>
    <scope>GENOME REANNOTATION</scope>
    <source>
        <strain>cv. Columbia</strain>
    </source>
</reference>
<reference key="3">
    <citation type="journal article" date="2003" name="Science">
        <title>Empirical analysis of transcriptional activity in the Arabidopsis genome.</title>
        <authorList>
            <person name="Yamada K."/>
            <person name="Lim J."/>
            <person name="Dale J.M."/>
            <person name="Chen H."/>
            <person name="Shinn P."/>
            <person name="Palm C.J."/>
            <person name="Southwick A.M."/>
            <person name="Wu H.C."/>
            <person name="Kim C.J."/>
            <person name="Nguyen M."/>
            <person name="Pham P.K."/>
            <person name="Cheuk R.F."/>
            <person name="Karlin-Newmann G."/>
            <person name="Liu S.X."/>
            <person name="Lam B."/>
            <person name="Sakano H."/>
            <person name="Wu T."/>
            <person name="Yu G."/>
            <person name="Miranda M."/>
            <person name="Quach H.L."/>
            <person name="Tripp M."/>
            <person name="Chang C.H."/>
            <person name="Lee J.M."/>
            <person name="Toriumi M.J."/>
            <person name="Chan M.M."/>
            <person name="Tang C.C."/>
            <person name="Onodera C.S."/>
            <person name="Deng J.M."/>
            <person name="Akiyama K."/>
            <person name="Ansari Y."/>
            <person name="Arakawa T."/>
            <person name="Banh J."/>
            <person name="Banno F."/>
            <person name="Bowser L."/>
            <person name="Brooks S.Y."/>
            <person name="Carninci P."/>
            <person name="Chao Q."/>
            <person name="Choy N."/>
            <person name="Enju A."/>
            <person name="Goldsmith A.D."/>
            <person name="Gurjal M."/>
            <person name="Hansen N.F."/>
            <person name="Hayashizaki Y."/>
            <person name="Johnson-Hopson C."/>
            <person name="Hsuan V.W."/>
            <person name="Iida K."/>
            <person name="Karnes M."/>
            <person name="Khan S."/>
            <person name="Koesema E."/>
            <person name="Ishida J."/>
            <person name="Jiang P.X."/>
            <person name="Jones T."/>
            <person name="Kawai J."/>
            <person name="Kamiya A."/>
            <person name="Meyers C."/>
            <person name="Nakajima M."/>
            <person name="Narusaka M."/>
            <person name="Seki M."/>
            <person name="Sakurai T."/>
            <person name="Satou M."/>
            <person name="Tamse R."/>
            <person name="Vaysberg M."/>
            <person name="Wallender E.K."/>
            <person name="Wong C."/>
            <person name="Yamamura Y."/>
            <person name="Yuan S."/>
            <person name="Shinozaki K."/>
            <person name="Davis R.W."/>
            <person name="Theologis A."/>
            <person name="Ecker J.R."/>
        </authorList>
    </citation>
    <scope>NUCLEOTIDE SEQUENCE [LARGE SCALE MRNA]</scope>
    <source>
        <strain>cv. Columbia</strain>
    </source>
</reference>
<reference key="4">
    <citation type="submission" date="2005-06" db="PDB data bank">
        <title>Solution structure of a novel beta-grasp fold like domain of hypothetical protein (Arabidopsis thaliana).</title>
        <authorList>
            <consortium name="RIKEN structural genomics initiative (RSGI)"/>
        </authorList>
    </citation>
    <scope>STRUCTURE BY NMR OF 2-95</scope>
</reference>
<dbReference type="EMBL" id="AL163816">
    <property type="protein sequence ID" value="CAB87745.1"/>
    <property type="molecule type" value="Genomic_DNA"/>
</dbReference>
<dbReference type="EMBL" id="CP002686">
    <property type="protein sequence ID" value="AEE80422.1"/>
    <property type="molecule type" value="Genomic_DNA"/>
</dbReference>
<dbReference type="EMBL" id="AY035064">
    <property type="protein sequence ID" value="AAK59569.1"/>
    <property type="molecule type" value="mRNA"/>
</dbReference>
<dbReference type="EMBL" id="AY056362">
    <property type="protein sequence ID" value="AAL07248.1"/>
    <property type="molecule type" value="mRNA"/>
</dbReference>
<dbReference type="PIR" id="T48089">
    <property type="entry name" value="T48089"/>
</dbReference>
<dbReference type="PDB" id="1WF9">
    <property type="method" value="NMR"/>
    <property type="chains" value="A=2-95"/>
</dbReference>
<dbReference type="PDBsum" id="1WF9"/>
<dbReference type="BMRB" id="Q9LYC2"/>
<dbReference type="SMR" id="Q9LYC2"/>
<dbReference type="BioGRID" id="10789">
    <property type="interactions" value="2"/>
</dbReference>
<dbReference type="FunCoup" id="Q9LYC2">
    <property type="interactions" value="3891"/>
</dbReference>
<dbReference type="IntAct" id="Q9LYC2">
    <property type="interactions" value="2"/>
</dbReference>
<dbReference type="STRING" id="3702.Q9LYC2"/>
<dbReference type="TCDB" id="3.A.16.1.5">
    <property type="family name" value="the endoplasmic reticular retrotranslocon (er-rt) family"/>
</dbReference>
<dbReference type="GlyGen" id="Q9LYC2">
    <property type="glycosylation" value="1 site"/>
</dbReference>
<dbReference type="iPTMnet" id="Q9LYC2"/>
<dbReference type="PaxDb" id="3702-AT3G63000.1"/>
<dbReference type="ProteomicsDB" id="249047"/>
<dbReference type="DNASU" id="825475"/>
<dbReference type="EnsemblPlants" id="AT3G63000.1">
    <property type="protein sequence ID" value="AT3G63000.1"/>
    <property type="gene ID" value="AT3G63000"/>
</dbReference>
<dbReference type="Gramene" id="AT3G63000.1">
    <property type="protein sequence ID" value="AT3G63000.1"/>
    <property type="gene ID" value="AT3G63000"/>
</dbReference>
<dbReference type="KEGG" id="ath:AT3G63000"/>
<dbReference type="Araport" id="AT3G63000"/>
<dbReference type="TAIR" id="AT3G63000">
    <property type="gene designation" value="NPL41"/>
</dbReference>
<dbReference type="eggNOG" id="KOG2834">
    <property type="taxonomic scope" value="Eukaryota"/>
</dbReference>
<dbReference type="HOGENOM" id="CLU_052923_0_0_1"/>
<dbReference type="InParanoid" id="Q9LYC2"/>
<dbReference type="OMA" id="DYTMSTA"/>
<dbReference type="PhylomeDB" id="Q9LYC2"/>
<dbReference type="UniPathway" id="UPA00144"/>
<dbReference type="EvolutionaryTrace" id="Q9LYC2"/>
<dbReference type="PRO" id="PR:Q9LYC2"/>
<dbReference type="Proteomes" id="UP000006548">
    <property type="component" value="Chromosome 3"/>
</dbReference>
<dbReference type="ExpressionAtlas" id="Q9LYC2">
    <property type="expression patterns" value="baseline and differential"/>
</dbReference>
<dbReference type="GO" id="GO:0043161">
    <property type="term" value="P:proteasome-mediated ubiquitin-dependent protein catabolic process"/>
    <property type="evidence" value="ECO:0007669"/>
    <property type="project" value="UniProtKB-UniPathway"/>
</dbReference>
<dbReference type="CDD" id="cd08061">
    <property type="entry name" value="MPN_NPL4"/>
    <property type="match status" value="1"/>
</dbReference>
<dbReference type="CDD" id="cd17055">
    <property type="entry name" value="Ubl_AtNPL4_like"/>
    <property type="match status" value="1"/>
</dbReference>
<dbReference type="FunFam" id="3.10.20.90:FF:000331">
    <property type="entry name" value="NPL4-like protein 1"/>
    <property type="match status" value="1"/>
</dbReference>
<dbReference type="Gene3D" id="3.10.20.90">
    <property type="entry name" value="Phosphatidylinositol 3-kinase Catalytic Subunit, Chain A, domain 1"/>
    <property type="match status" value="1"/>
</dbReference>
<dbReference type="InterPro" id="IPR037518">
    <property type="entry name" value="MPN"/>
</dbReference>
<dbReference type="InterPro" id="IPR016563">
    <property type="entry name" value="Npl4"/>
</dbReference>
<dbReference type="InterPro" id="IPR007717">
    <property type="entry name" value="NPL4_C"/>
</dbReference>
<dbReference type="InterPro" id="IPR024682">
    <property type="entry name" value="Npl4_Ub-like_dom"/>
</dbReference>
<dbReference type="InterPro" id="IPR029071">
    <property type="entry name" value="Ubiquitin-like_domsf"/>
</dbReference>
<dbReference type="PANTHER" id="PTHR12710">
    <property type="entry name" value="NUCLEAR PROTEIN LOCALIZATION 4"/>
    <property type="match status" value="1"/>
</dbReference>
<dbReference type="PANTHER" id="PTHR12710:SF0">
    <property type="entry name" value="NUCLEAR PROTEIN LOCALIZATION PROTEIN 4 HOMOLOG"/>
    <property type="match status" value="1"/>
</dbReference>
<dbReference type="Pfam" id="PF05021">
    <property type="entry name" value="NPL4"/>
    <property type="match status" value="1"/>
</dbReference>
<dbReference type="Pfam" id="PF11543">
    <property type="entry name" value="UN_NPL4"/>
    <property type="match status" value="1"/>
</dbReference>
<dbReference type="SUPFAM" id="SSF54236">
    <property type="entry name" value="Ubiquitin-like"/>
    <property type="match status" value="1"/>
</dbReference>
<dbReference type="PROSITE" id="PS50249">
    <property type="entry name" value="MPN"/>
    <property type="match status" value="1"/>
</dbReference>
<proteinExistence type="evidence at protein level"/>
<name>NPL41_ARATH</name>
<feature type="chain" id="PRO_0000238458" description="NPL4-like protein 1">
    <location>
        <begin position="1"/>
        <end position="413"/>
    </location>
</feature>
<feature type="domain" description="MPN" evidence="3">
    <location>
        <begin position="131"/>
        <end position="272"/>
    </location>
</feature>
<feature type="modified residue" description="Phosphoserine" evidence="2">
    <location>
        <position position="104"/>
    </location>
</feature>
<feature type="strand" evidence="5">
    <location>
        <begin position="2"/>
        <end position="7"/>
    </location>
</feature>
<feature type="strand" evidence="5">
    <location>
        <begin position="12"/>
        <end position="17"/>
    </location>
</feature>
<feature type="helix" evidence="5">
    <location>
        <begin position="24"/>
        <end position="34"/>
    </location>
</feature>
<feature type="turn" evidence="5">
    <location>
        <begin position="39"/>
        <end position="41"/>
    </location>
</feature>
<feature type="strand" evidence="5">
    <location>
        <begin position="45"/>
        <end position="47"/>
    </location>
</feature>
<feature type="helix" evidence="5">
    <location>
        <begin position="48"/>
        <end position="51"/>
    </location>
</feature>
<feature type="helix" evidence="5">
    <location>
        <begin position="56"/>
        <end position="59"/>
    </location>
</feature>
<feature type="helix" evidence="5">
    <location>
        <begin position="72"/>
        <end position="74"/>
    </location>
</feature>
<feature type="strand" evidence="5">
    <location>
        <begin position="82"/>
        <end position="84"/>
    </location>
</feature>
<comment type="function">
    <text evidence="1">May be part of a complex that binds ubiquitinated proteins and that is necessary for the export of misfolded proteins from the ER to the cytoplasm, where they are degraded by the proteasome.</text>
</comment>
<comment type="pathway">
    <text>Protein degradation; proteasomal ubiquitin-dependent pathway.</text>
</comment>
<comment type="similarity">
    <text evidence="4">Belongs to the NPL4 family.</text>
</comment>
<evidence type="ECO:0000250" key="1"/>
<evidence type="ECO:0000250" key="2">
    <source>
        <dbReference type="UniProtKB" id="O82264"/>
    </source>
</evidence>
<evidence type="ECO:0000255" key="3">
    <source>
        <dbReference type="PROSITE-ProRule" id="PRU01182"/>
    </source>
</evidence>
<evidence type="ECO:0000305" key="4"/>
<evidence type="ECO:0007829" key="5">
    <source>
        <dbReference type="PDB" id="1WF9"/>
    </source>
</evidence>
<sequence>MTMLRVRSRDGLERVSVDGPHITVSQLKTLIQDQLQIPIHNQTLSTNRNLLLAKSPSDFLAFTDMADPNLRISSLNLAHGSMVYLAYEGERTIRGGPAVTPAGSFGRKMTVEDLIARQMRVGRQEKAHCDSVSFDRDCANAFQHFVNESLAFAVKRGGFMYGNVSEDGQVEVNFIYEPPQQGMEDNLILMRDSEEEKRVDAIALGLGMRRVGFIFNQTVTQDKKEYTLSNVEVLLAAQLHAESELKEWVTAVVKLEINEDGGADVHFEPFQMSDMCVRLFKEGWFETEIGPEDDPKLSKLKKEVVVGVKDVKEVDNDFFLVLVKILDHQGPLSCTFPIENRNTQTTMRALKTHMERARSLPFVKRISDFHLLLFVAQFLDVSSDVPALAECVRLQSHVPEGYELLIDSMANTS</sequence>
<organism>
    <name type="scientific">Arabidopsis thaliana</name>
    <name type="common">Mouse-ear cress</name>
    <dbReference type="NCBI Taxonomy" id="3702"/>
    <lineage>
        <taxon>Eukaryota</taxon>
        <taxon>Viridiplantae</taxon>
        <taxon>Streptophyta</taxon>
        <taxon>Embryophyta</taxon>
        <taxon>Tracheophyta</taxon>
        <taxon>Spermatophyta</taxon>
        <taxon>Magnoliopsida</taxon>
        <taxon>eudicotyledons</taxon>
        <taxon>Gunneridae</taxon>
        <taxon>Pentapetalae</taxon>
        <taxon>rosids</taxon>
        <taxon>malvids</taxon>
        <taxon>Brassicales</taxon>
        <taxon>Brassicaceae</taxon>
        <taxon>Camelineae</taxon>
        <taxon>Arabidopsis</taxon>
    </lineage>
</organism>